<name>PUR7_CORGL</name>
<evidence type="ECO:0000255" key="1">
    <source>
        <dbReference type="HAMAP-Rule" id="MF_00137"/>
    </source>
</evidence>
<comment type="catalytic activity">
    <reaction evidence="1">
        <text>5-amino-1-(5-phospho-D-ribosyl)imidazole-4-carboxylate + L-aspartate + ATP = (2S)-2-[5-amino-1-(5-phospho-beta-D-ribosyl)imidazole-4-carboxamido]succinate + ADP + phosphate + 2 H(+)</text>
        <dbReference type="Rhea" id="RHEA:22628"/>
        <dbReference type="ChEBI" id="CHEBI:15378"/>
        <dbReference type="ChEBI" id="CHEBI:29991"/>
        <dbReference type="ChEBI" id="CHEBI:30616"/>
        <dbReference type="ChEBI" id="CHEBI:43474"/>
        <dbReference type="ChEBI" id="CHEBI:58443"/>
        <dbReference type="ChEBI" id="CHEBI:77657"/>
        <dbReference type="ChEBI" id="CHEBI:456216"/>
        <dbReference type="EC" id="6.3.2.6"/>
    </reaction>
</comment>
<comment type="pathway">
    <text evidence="1">Purine metabolism; IMP biosynthesis via de novo pathway; 5-amino-1-(5-phospho-D-ribosyl)imidazole-4-carboxamide from 5-amino-1-(5-phospho-D-ribosyl)imidazole-4-carboxylate: step 1/2.</text>
</comment>
<comment type="similarity">
    <text evidence="1">Belongs to the SAICAR synthetase family.</text>
</comment>
<proteinExistence type="inferred from homology"/>
<reference key="1">
    <citation type="journal article" date="2003" name="Appl. Microbiol. Biotechnol.">
        <title>The Corynebacterium glutamicum genome: features and impacts on biotechnological processes.</title>
        <authorList>
            <person name="Ikeda M."/>
            <person name="Nakagawa S."/>
        </authorList>
    </citation>
    <scope>NUCLEOTIDE SEQUENCE [LARGE SCALE GENOMIC DNA]</scope>
    <source>
        <strain>ATCC 13032 / DSM 20300 / JCM 1318 / BCRC 11384 / CCUG 27702 / LMG 3730 / NBRC 12168 / NCIMB 10025 / NRRL B-2784 / 534</strain>
    </source>
</reference>
<reference key="2">
    <citation type="journal article" date="2003" name="J. Biotechnol.">
        <title>The complete Corynebacterium glutamicum ATCC 13032 genome sequence and its impact on the production of L-aspartate-derived amino acids and vitamins.</title>
        <authorList>
            <person name="Kalinowski J."/>
            <person name="Bathe B."/>
            <person name="Bartels D."/>
            <person name="Bischoff N."/>
            <person name="Bott M."/>
            <person name="Burkovski A."/>
            <person name="Dusch N."/>
            <person name="Eggeling L."/>
            <person name="Eikmanns B.J."/>
            <person name="Gaigalat L."/>
            <person name="Goesmann A."/>
            <person name="Hartmann M."/>
            <person name="Huthmacher K."/>
            <person name="Kraemer R."/>
            <person name="Linke B."/>
            <person name="McHardy A.C."/>
            <person name="Meyer F."/>
            <person name="Moeckel B."/>
            <person name="Pfefferle W."/>
            <person name="Puehler A."/>
            <person name="Rey D.A."/>
            <person name="Rueckert C."/>
            <person name="Rupp O."/>
            <person name="Sahm H."/>
            <person name="Wendisch V.F."/>
            <person name="Wiegraebe I."/>
            <person name="Tauch A."/>
        </authorList>
    </citation>
    <scope>NUCLEOTIDE SEQUENCE [LARGE SCALE GENOMIC DNA]</scope>
    <source>
        <strain>ATCC 13032 / DSM 20300 / JCM 1318 / BCRC 11384 / CCUG 27702 / LMG 3730 / NBRC 12168 / NCIMB 10025 / NRRL B-2784 / 534</strain>
    </source>
</reference>
<organism>
    <name type="scientific">Corynebacterium glutamicum (strain ATCC 13032 / DSM 20300 / JCM 1318 / BCRC 11384 / CCUG 27702 / LMG 3730 / NBRC 12168 / NCIMB 10025 / NRRL B-2784 / 534)</name>
    <dbReference type="NCBI Taxonomy" id="196627"/>
    <lineage>
        <taxon>Bacteria</taxon>
        <taxon>Bacillati</taxon>
        <taxon>Actinomycetota</taxon>
        <taxon>Actinomycetes</taxon>
        <taxon>Mycobacteriales</taxon>
        <taxon>Corynebacteriaceae</taxon>
        <taxon>Corynebacterium</taxon>
    </lineage>
</organism>
<dbReference type="EC" id="6.3.2.6" evidence="1"/>
<dbReference type="EMBL" id="BA000036">
    <property type="protein sequence ID" value="BAB99990.1"/>
    <property type="molecule type" value="Genomic_DNA"/>
</dbReference>
<dbReference type="EMBL" id="BX927155">
    <property type="protein sequence ID" value="CAF21258.1"/>
    <property type="molecule type" value="Genomic_DNA"/>
</dbReference>
<dbReference type="RefSeq" id="NP_601795.1">
    <property type="nucleotide sequence ID" value="NC_003450.3"/>
</dbReference>
<dbReference type="RefSeq" id="WP_003863110.1">
    <property type="nucleotide sequence ID" value="NC_006958.1"/>
</dbReference>
<dbReference type="SMR" id="Q8NMH6"/>
<dbReference type="STRING" id="196627.cg2874"/>
<dbReference type="KEGG" id="cgb:cg2874"/>
<dbReference type="KEGG" id="cgl:Cgl2597"/>
<dbReference type="PATRIC" id="fig|196627.13.peg.2530"/>
<dbReference type="eggNOG" id="COG0152">
    <property type="taxonomic scope" value="Bacteria"/>
</dbReference>
<dbReference type="HOGENOM" id="CLU_045637_0_0_11"/>
<dbReference type="OrthoDB" id="9801549at2"/>
<dbReference type="BioCyc" id="CORYNE:G18NG-12213-MONOMER"/>
<dbReference type="UniPathway" id="UPA00074">
    <property type="reaction ID" value="UER00131"/>
</dbReference>
<dbReference type="Proteomes" id="UP000000582">
    <property type="component" value="Chromosome"/>
</dbReference>
<dbReference type="Proteomes" id="UP000001009">
    <property type="component" value="Chromosome"/>
</dbReference>
<dbReference type="GO" id="GO:0005737">
    <property type="term" value="C:cytoplasm"/>
    <property type="evidence" value="ECO:0007669"/>
    <property type="project" value="TreeGrafter"/>
</dbReference>
<dbReference type="GO" id="GO:0005524">
    <property type="term" value="F:ATP binding"/>
    <property type="evidence" value="ECO:0007669"/>
    <property type="project" value="UniProtKB-KW"/>
</dbReference>
<dbReference type="GO" id="GO:0004639">
    <property type="term" value="F:phosphoribosylaminoimidazolesuccinocarboxamide synthase activity"/>
    <property type="evidence" value="ECO:0007669"/>
    <property type="project" value="UniProtKB-UniRule"/>
</dbReference>
<dbReference type="GO" id="GO:0006189">
    <property type="term" value="P:'de novo' IMP biosynthetic process"/>
    <property type="evidence" value="ECO:0007669"/>
    <property type="project" value="UniProtKB-UniRule"/>
</dbReference>
<dbReference type="CDD" id="cd01414">
    <property type="entry name" value="SAICAR_synt_Sc"/>
    <property type="match status" value="1"/>
</dbReference>
<dbReference type="FunFam" id="3.30.200.20:FF:000199">
    <property type="entry name" value="Phosphoribosylaminoimidazole-succinocarboxamide synthase"/>
    <property type="match status" value="1"/>
</dbReference>
<dbReference type="FunFam" id="3.30.470.20:FF:000015">
    <property type="entry name" value="Phosphoribosylaminoimidazole-succinocarboxamide synthase"/>
    <property type="match status" value="1"/>
</dbReference>
<dbReference type="Gene3D" id="3.30.470.20">
    <property type="entry name" value="ATP-grasp fold, B domain"/>
    <property type="match status" value="1"/>
</dbReference>
<dbReference type="Gene3D" id="3.30.200.20">
    <property type="entry name" value="Phosphorylase Kinase, domain 1"/>
    <property type="match status" value="1"/>
</dbReference>
<dbReference type="HAMAP" id="MF_00137">
    <property type="entry name" value="SAICAR_synth"/>
    <property type="match status" value="1"/>
</dbReference>
<dbReference type="InterPro" id="IPR028923">
    <property type="entry name" value="SAICAR_synt/ADE2_N"/>
</dbReference>
<dbReference type="InterPro" id="IPR001636">
    <property type="entry name" value="SAICAR_synth"/>
</dbReference>
<dbReference type="InterPro" id="IPR018236">
    <property type="entry name" value="SAICAR_synthetase_CS"/>
</dbReference>
<dbReference type="NCBIfam" id="NF010568">
    <property type="entry name" value="PRK13961.1"/>
    <property type="match status" value="1"/>
</dbReference>
<dbReference type="NCBIfam" id="TIGR00081">
    <property type="entry name" value="purC"/>
    <property type="match status" value="1"/>
</dbReference>
<dbReference type="PANTHER" id="PTHR43700">
    <property type="entry name" value="PHOSPHORIBOSYLAMINOIMIDAZOLE-SUCCINOCARBOXAMIDE SYNTHASE"/>
    <property type="match status" value="1"/>
</dbReference>
<dbReference type="PANTHER" id="PTHR43700:SF1">
    <property type="entry name" value="PHOSPHORIBOSYLAMINOIMIDAZOLE-SUCCINOCARBOXAMIDE SYNTHASE"/>
    <property type="match status" value="1"/>
</dbReference>
<dbReference type="Pfam" id="PF01259">
    <property type="entry name" value="SAICAR_synt"/>
    <property type="match status" value="1"/>
</dbReference>
<dbReference type="SUPFAM" id="SSF56104">
    <property type="entry name" value="SAICAR synthase-like"/>
    <property type="match status" value="1"/>
</dbReference>
<dbReference type="PROSITE" id="PS01057">
    <property type="entry name" value="SAICAR_SYNTHETASE_1"/>
    <property type="match status" value="1"/>
</dbReference>
<dbReference type="PROSITE" id="PS01058">
    <property type="entry name" value="SAICAR_SYNTHETASE_2"/>
    <property type="match status" value="1"/>
</dbReference>
<sequence>MRPELSQYKHLSAGKVREIYEIDDKHILMVASDRISAYDFILDTEIPDKGRVLTAMSQFFFDTIDFPNHLAGPADDPRIPEEVLGRAMVCKKLNMLPFECVVRGYLTGSGLVEYKQTSSVCGVELPEGLVESSQLPEPIFTPATKADIGDHDINVSFDVVEERLGEARANQLRDASIAIYKAAAEIARDRGVILADTKFEFGIDEDGTLVLGDEVLTPDSSRYWPLEGYEAGSVQPSFDKQFVRNWLTGPKSGWDKDSGLEPPALPGSVVEATRERYIEAYELISGQKFCQWIGSCV</sequence>
<accession>Q8NMH6</accession>
<gene>
    <name evidence="1" type="primary">purC</name>
    <name type="ordered locus">Cgl2597</name>
    <name type="ordered locus">cg2874</name>
</gene>
<protein>
    <recommendedName>
        <fullName evidence="1">Phosphoribosylaminoimidazole-succinocarboxamide synthase</fullName>
        <ecNumber evidence="1">6.3.2.6</ecNumber>
    </recommendedName>
    <alternativeName>
        <fullName evidence="1">SAICAR synthetase</fullName>
    </alternativeName>
</protein>
<keyword id="KW-0067">ATP-binding</keyword>
<keyword id="KW-0436">Ligase</keyword>
<keyword id="KW-0547">Nucleotide-binding</keyword>
<keyword id="KW-0658">Purine biosynthesis</keyword>
<keyword id="KW-1185">Reference proteome</keyword>
<feature type="chain" id="PRO_0000100822" description="Phosphoribosylaminoimidazole-succinocarboxamide synthase">
    <location>
        <begin position="1"/>
        <end position="297"/>
    </location>
</feature>